<proteinExistence type="inferred from homology"/>
<name>RL33_HALHL</name>
<keyword id="KW-1185">Reference proteome</keyword>
<keyword id="KW-0687">Ribonucleoprotein</keyword>
<keyword id="KW-0689">Ribosomal protein</keyword>
<organism>
    <name type="scientific">Halorhodospira halophila (strain DSM 244 / SL1)</name>
    <name type="common">Ectothiorhodospira halophila (strain DSM 244 / SL1)</name>
    <dbReference type="NCBI Taxonomy" id="349124"/>
    <lineage>
        <taxon>Bacteria</taxon>
        <taxon>Pseudomonadati</taxon>
        <taxon>Pseudomonadota</taxon>
        <taxon>Gammaproteobacteria</taxon>
        <taxon>Chromatiales</taxon>
        <taxon>Ectothiorhodospiraceae</taxon>
        <taxon>Halorhodospira</taxon>
    </lineage>
</organism>
<gene>
    <name evidence="1" type="primary">rpmG</name>
    <name type="ordered locus">Hhal_2313</name>
</gene>
<comment type="similarity">
    <text evidence="1">Belongs to the bacterial ribosomal protein bL33 family.</text>
</comment>
<reference key="1">
    <citation type="submission" date="2006-12" db="EMBL/GenBank/DDBJ databases">
        <title>Complete sequence of Halorhodospira halophila SL1.</title>
        <authorList>
            <consortium name="US DOE Joint Genome Institute"/>
            <person name="Copeland A."/>
            <person name="Lucas S."/>
            <person name="Lapidus A."/>
            <person name="Barry K."/>
            <person name="Detter J.C."/>
            <person name="Glavina del Rio T."/>
            <person name="Hammon N."/>
            <person name="Israni S."/>
            <person name="Dalin E."/>
            <person name="Tice H."/>
            <person name="Pitluck S."/>
            <person name="Saunders E."/>
            <person name="Brettin T."/>
            <person name="Bruce D."/>
            <person name="Han C."/>
            <person name="Tapia R."/>
            <person name="Schmutz J."/>
            <person name="Larimer F."/>
            <person name="Land M."/>
            <person name="Hauser L."/>
            <person name="Kyrpides N."/>
            <person name="Mikhailova N."/>
            <person name="Hoff W."/>
            <person name="Richardson P."/>
        </authorList>
    </citation>
    <scope>NUCLEOTIDE SEQUENCE [LARGE SCALE GENOMIC DNA]</scope>
    <source>
        <strain>DSM 244 / SL1</strain>
    </source>
</reference>
<evidence type="ECO:0000255" key="1">
    <source>
        <dbReference type="HAMAP-Rule" id="MF_00294"/>
    </source>
</evidence>
<evidence type="ECO:0000305" key="2"/>
<feature type="chain" id="PRO_1000059279" description="Large ribosomal subunit protein bL33">
    <location>
        <begin position="1"/>
        <end position="56"/>
    </location>
</feature>
<dbReference type="EMBL" id="CP000544">
    <property type="protein sequence ID" value="ABM63076.1"/>
    <property type="molecule type" value="Genomic_DNA"/>
</dbReference>
<dbReference type="RefSeq" id="WP_011815098.1">
    <property type="nucleotide sequence ID" value="NC_008789.1"/>
</dbReference>
<dbReference type="SMR" id="A1WZG4"/>
<dbReference type="STRING" id="349124.Hhal_2313"/>
<dbReference type="KEGG" id="hha:Hhal_2313"/>
<dbReference type="eggNOG" id="COG0267">
    <property type="taxonomic scope" value="Bacteria"/>
</dbReference>
<dbReference type="HOGENOM" id="CLU_190949_1_1_6"/>
<dbReference type="OrthoDB" id="21586at2"/>
<dbReference type="Proteomes" id="UP000000647">
    <property type="component" value="Chromosome"/>
</dbReference>
<dbReference type="GO" id="GO:0022625">
    <property type="term" value="C:cytosolic large ribosomal subunit"/>
    <property type="evidence" value="ECO:0007669"/>
    <property type="project" value="TreeGrafter"/>
</dbReference>
<dbReference type="GO" id="GO:0003735">
    <property type="term" value="F:structural constituent of ribosome"/>
    <property type="evidence" value="ECO:0007669"/>
    <property type="project" value="InterPro"/>
</dbReference>
<dbReference type="GO" id="GO:0006412">
    <property type="term" value="P:translation"/>
    <property type="evidence" value="ECO:0007669"/>
    <property type="project" value="UniProtKB-UniRule"/>
</dbReference>
<dbReference type="FunFam" id="2.20.28.120:FF:000001">
    <property type="entry name" value="50S ribosomal protein L33"/>
    <property type="match status" value="1"/>
</dbReference>
<dbReference type="Gene3D" id="2.20.28.120">
    <property type="entry name" value="Ribosomal protein L33"/>
    <property type="match status" value="1"/>
</dbReference>
<dbReference type="HAMAP" id="MF_00294">
    <property type="entry name" value="Ribosomal_bL33"/>
    <property type="match status" value="1"/>
</dbReference>
<dbReference type="InterPro" id="IPR001705">
    <property type="entry name" value="Ribosomal_bL33"/>
</dbReference>
<dbReference type="InterPro" id="IPR018264">
    <property type="entry name" value="Ribosomal_bL33_CS"/>
</dbReference>
<dbReference type="InterPro" id="IPR038584">
    <property type="entry name" value="Ribosomal_bL33_sf"/>
</dbReference>
<dbReference type="InterPro" id="IPR011332">
    <property type="entry name" value="Ribosomal_zn-bd"/>
</dbReference>
<dbReference type="NCBIfam" id="NF001860">
    <property type="entry name" value="PRK00595.1"/>
    <property type="match status" value="1"/>
</dbReference>
<dbReference type="NCBIfam" id="TIGR01023">
    <property type="entry name" value="rpmG_bact"/>
    <property type="match status" value="1"/>
</dbReference>
<dbReference type="PANTHER" id="PTHR15238">
    <property type="entry name" value="54S RIBOSOMAL PROTEIN L39, MITOCHONDRIAL"/>
    <property type="match status" value="1"/>
</dbReference>
<dbReference type="PANTHER" id="PTHR15238:SF1">
    <property type="entry name" value="LARGE RIBOSOMAL SUBUNIT PROTEIN BL33M"/>
    <property type="match status" value="1"/>
</dbReference>
<dbReference type="Pfam" id="PF00471">
    <property type="entry name" value="Ribosomal_L33"/>
    <property type="match status" value="1"/>
</dbReference>
<dbReference type="SUPFAM" id="SSF57829">
    <property type="entry name" value="Zn-binding ribosomal proteins"/>
    <property type="match status" value="1"/>
</dbReference>
<dbReference type="PROSITE" id="PS00582">
    <property type="entry name" value="RIBOSOMAL_L33"/>
    <property type="match status" value="1"/>
</dbReference>
<protein>
    <recommendedName>
        <fullName evidence="1">Large ribosomal subunit protein bL33</fullName>
    </recommendedName>
    <alternativeName>
        <fullName evidence="2">50S ribosomal protein L33</fullName>
    </alternativeName>
</protein>
<accession>A1WZG4</accession>
<sequence>MAGKSAREKIKLVSSAGTGHFYTTDKNKRNTPHKLEMKKYDPVVRKHVTYRETKLK</sequence>